<accession>A9N839</accession>
<gene>
    <name evidence="1" type="primary">rpsI</name>
    <name type="ordered locus">SPAB_04169</name>
</gene>
<feature type="chain" id="PRO_1000081831" description="Small ribosomal subunit protein uS9">
    <location>
        <begin position="1"/>
        <end position="130"/>
    </location>
</feature>
<sequence>MAENQYYGTGRRKSSAARVFIKPGNGKIVINQRSLEQYFGRETARMVVRQPLELVDMVEKLDLYITVKGGGISGQAGAIRHGITRALMEYDESLRGELRKAGFVTRDARQVERKKVGLRKARRRPQFSKR</sequence>
<protein>
    <recommendedName>
        <fullName evidence="1">Small ribosomal subunit protein uS9</fullName>
    </recommendedName>
    <alternativeName>
        <fullName evidence="2">30S ribosomal protein S9</fullName>
    </alternativeName>
</protein>
<evidence type="ECO:0000255" key="1">
    <source>
        <dbReference type="HAMAP-Rule" id="MF_00532"/>
    </source>
</evidence>
<evidence type="ECO:0000305" key="2"/>
<dbReference type="EMBL" id="CP000886">
    <property type="protein sequence ID" value="ABX69492.1"/>
    <property type="molecule type" value="Genomic_DNA"/>
</dbReference>
<dbReference type="RefSeq" id="WP_000829815.1">
    <property type="nucleotide sequence ID" value="NC_010102.1"/>
</dbReference>
<dbReference type="SMR" id="A9N839"/>
<dbReference type="GeneID" id="97393262"/>
<dbReference type="KEGG" id="spq:SPAB_04169"/>
<dbReference type="PATRIC" id="fig|1016998.12.peg.3925"/>
<dbReference type="HOGENOM" id="CLU_046483_2_1_6"/>
<dbReference type="BioCyc" id="SENT1016998:SPAB_RS16945-MONOMER"/>
<dbReference type="Proteomes" id="UP000008556">
    <property type="component" value="Chromosome"/>
</dbReference>
<dbReference type="GO" id="GO:0022627">
    <property type="term" value="C:cytosolic small ribosomal subunit"/>
    <property type="evidence" value="ECO:0007669"/>
    <property type="project" value="TreeGrafter"/>
</dbReference>
<dbReference type="GO" id="GO:0003723">
    <property type="term" value="F:RNA binding"/>
    <property type="evidence" value="ECO:0007669"/>
    <property type="project" value="TreeGrafter"/>
</dbReference>
<dbReference type="GO" id="GO:0003735">
    <property type="term" value="F:structural constituent of ribosome"/>
    <property type="evidence" value="ECO:0007669"/>
    <property type="project" value="InterPro"/>
</dbReference>
<dbReference type="GO" id="GO:0006412">
    <property type="term" value="P:translation"/>
    <property type="evidence" value="ECO:0007669"/>
    <property type="project" value="UniProtKB-UniRule"/>
</dbReference>
<dbReference type="FunFam" id="3.30.230.10:FF:000001">
    <property type="entry name" value="30S ribosomal protein S9"/>
    <property type="match status" value="1"/>
</dbReference>
<dbReference type="Gene3D" id="3.30.230.10">
    <property type="match status" value="1"/>
</dbReference>
<dbReference type="HAMAP" id="MF_00532_B">
    <property type="entry name" value="Ribosomal_uS9_B"/>
    <property type="match status" value="1"/>
</dbReference>
<dbReference type="InterPro" id="IPR020568">
    <property type="entry name" value="Ribosomal_Su5_D2-typ_SF"/>
</dbReference>
<dbReference type="InterPro" id="IPR000754">
    <property type="entry name" value="Ribosomal_uS9"/>
</dbReference>
<dbReference type="InterPro" id="IPR023035">
    <property type="entry name" value="Ribosomal_uS9_bac/plastid"/>
</dbReference>
<dbReference type="InterPro" id="IPR020574">
    <property type="entry name" value="Ribosomal_uS9_CS"/>
</dbReference>
<dbReference type="InterPro" id="IPR014721">
    <property type="entry name" value="Ribsml_uS5_D2-typ_fold_subgr"/>
</dbReference>
<dbReference type="NCBIfam" id="NF001099">
    <property type="entry name" value="PRK00132.1"/>
    <property type="match status" value="1"/>
</dbReference>
<dbReference type="PANTHER" id="PTHR21569">
    <property type="entry name" value="RIBOSOMAL PROTEIN S9"/>
    <property type="match status" value="1"/>
</dbReference>
<dbReference type="PANTHER" id="PTHR21569:SF1">
    <property type="entry name" value="SMALL RIBOSOMAL SUBUNIT PROTEIN US9M"/>
    <property type="match status" value="1"/>
</dbReference>
<dbReference type="Pfam" id="PF00380">
    <property type="entry name" value="Ribosomal_S9"/>
    <property type="match status" value="1"/>
</dbReference>
<dbReference type="SUPFAM" id="SSF54211">
    <property type="entry name" value="Ribosomal protein S5 domain 2-like"/>
    <property type="match status" value="1"/>
</dbReference>
<dbReference type="PROSITE" id="PS00360">
    <property type="entry name" value="RIBOSOMAL_S9"/>
    <property type="match status" value="1"/>
</dbReference>
<organism>
    <name type="scientific">Salmonella paratyphi B (strain ATCC BAA-1250 / SPB7)</name>
    <dbReference type="NCBI Taxonomy" id="1016998"/>
    <lineage>
        <taxon>Bacteria</taxon>
        <taxon>Pseudomonadati</taxon>
        <taxon>Pseudomonadota</taxon>
        <taxon>Gammaproteobacteria</taxon>
        <taxon>Enterobacterales</taxon>
        <taxon>Enterobacteriaceae</taxon>
        <taxon>Salmonella</taxon>
    </lineage>
</organism>
<comment type="similarity">
    <text evidence="1">Belongs to the universal ribosomal protein uS9 family.</text>
</comment>
<proteinExistence type="inferred from homology"/>
<name>RS9_SALPB</name>
<reference key="1">
    <citation type="submission" date="2007-11" db="EMBL/GenBank/DDBJ databases">
        <authorList>
            <consortium name="The Salmonella enterica serovar Paratyphi B Genome Sequencing Project"/>
            <person name="McClelland M."/>
            <person name="Sanderson E.K."/>
            <person name="Porwollik S."/>
            <person name="Spieth J."/>
            <person name="Clifton W.S."/>
            <person name="Fulton R."/>
            <person name="Cordes M."/>
            <person name="Wollam A."/>
            <person name="Shah N."/>
            <person name="Pepin K."/>
            <person name="Bhonagiri V."/>
            <person name="Nash W."/>
            <person name="Johnson M."/>
            <person name="Thiruvilangam P."/>
            <person name="Wilson R."/>
        </authorList>
    </citation>
    <scope>NUCLEOTIDE SEQUENCE [LARGE SCALE GENOMIC DNA]</scope>
    <source>
        <strain>ATCC BAA-1250 / SPB7</strain>
    </source>
</reference>
<keyword id="KW-0687">Ribonucleoprotein</keyword>
<keyword id="KW-0689">Ribosomal protein</keyword>